<protein>
    <recommendedName>
        <fullName>Inward rectifier potassium channel 16</fullName>
    </recommendedName>
    <alternativeName>
        <fullName>Inward rectifier K(+) channel Kir5.1</fullName>
    </alternativeName>
    <alternativeName>
        <fullName>Potassium channel, inwardly rectifying subfamily J member 16</fullName>
    </alternativeName>
</protein>
<gene>
    <name type="primary">KCNJ16</name>
</gene>
<accession>Q9NPI9</accession>
<comment type="function">
    <text evidence="11">Inward rectifier potassium channels are characterized by a greater tendency to allow potassium to flow into the cell rather than out of it. Their voltage dependence is regulated by the concentration of extracellular potassium; as external potassium is raised, the voltage range of the channel opening shifts to more positive voltages. The inward rectification is mainly due to the blockage of outward current by internal magnesium. KCNJ16 may be involved in the regulation of fluid and pH balance. In the kidney, together with KCNJ10, mediates basolateral K(+) recycling in distal tubules; this process is critical for Na(+) reabsorption at the tubules (PubMed:24561201).</text>
</comment>
<comment type="catalytic activity">
    <reaction evidence="3">
        <text>K(+)(in) = K(+)(out)</text>
        <dbReference type="Rhea" id="RHEA:29463"/>
        <dbReference type="ChEBI" id="CHEBI:29103"/>
    </reaction>
</comment>
<comment type="activity regulation">
    <text evidence="3">Channel activity is strongly regulated by variations of cytosolic pH; channels are activated by alkaline and inhibited by acidic pH values. Activated by phosphatidylinositol 4,5 biphosphate (PtdIns(4,5)P2).</text>
</comment>
<comment type="subunit">
    <text evidence="4 7 10">It forms heteromeric channels with Kir4.1/KCNJ10; this interaction is required for KCNJ16 localization to the basolateral membrane in kidney cells. As a heteromer with KCNJ10, may interact with MAGI1; this interaction may facilitate KCNJ10/KCNJ16 potassium channel expression at the basolateral membrane in kidney cells (PubMed:24561201). May form heteromers with Kir2.1/KCNJ2 (Probable). Can form heteromeric channels with Kir4.2/KCNJ15 (By similarity).</text>
</comment>
<comment type="subcellular location">
    <subcellularLocation>
        <location evidence="7">Membrane</location>
        <topology>Multi-pass membrane protein</topology>
    </subcellularLocation>
    <subcellularLocation>
        <location evidence="7">Basolateral cell membrane</location>
    </subcellularLocation>
    <text evidence="7">In kidney distal convoluted tubules, located in the basolateral membrane in the presence of KCNJ10.</text>
</comment>
<comment type="tissue specificity">
    <text evidence="5 6 7">Widely expressed, with highest levels in adult and fetal kidney (at protein level). In the kidney, expressed in the proximal and distal convoluted tubules, but not in glomeruli nor collecting ducts.</text>
</comment>
<comment type="disease" evidence="8">
    <disease id="DI-06151">
        <name>Hypokalemic tubulopathy and deafness</name>
        <acronym>HKTD</acronym>
        <description>An autosomal recessive disease characterized by renal tubulopathy with hypokalemia, salt wasting, disturbed acid-base homeostasis, and sensorineural deafness.</description>
        <dbReference type="MIM" id="619406"/>
    </disease>
    <text>The disease is caused by variants affecting the gene represented in this entry.</text>
</comment>
<comment type="similarity">
    <text evidence="9">Belongs to the inward rectifier-type potassium channel (TC 1.A.2.1) family. KCNJ16 subfamily.</text>
</comment>
<dbReference type="EMBL" id="AF179353">
    <property type="protein sequence ID" value="AAG09401.1"/>
    <property type="molecule type" value="mRNA"/>
</dbReference>
<dbReference type="EMBL" id="AF153814">
    <property type="protein sequence ID" value="AAF73244.1"/>
    <property type="molecule type" value="Genomic_DNA"/>
</dbReference>
<dbReference type="EMBL" id="AF153815">
    <property type="protein sequence ID" value="AAF73238.1"/>
    <property type="molecule type" value="mRNA"/>
</dbReference>
<dbReference type="EMBL" id="AF153816">
    <property type="protein sequence ID" value="AAF73239.1"/>
    <property type="molecule type" value="mRNA"/>
</dbReference>
<dbReference type="EMBL" id="AF153817">
    <property type="protein sequence ID" value="AAF73240.1"/>
    <property type="molecule type" value="mRNA"/>
</dbReference>
<dbReference type="CCDS" id="CCDS11687.1"/>
<dbReference type="RefSeq" id="NP_001257351.1">
    <property type="nucleotide sequence ID" value="NM_001270422.2"/>
</dbReference>
<dbReference type="RefSeq" id="NP_001278551.2">
    <property type="nucleotide sequence ID" value="NM_001291622.3"/>
</dbReference>
<dbReference type="RefSeq" id="NP_001278552.2">
    <property type="nucleotide sequence ID" value="NM_001291623.2"/>
</dbReference>
<dbReference type="RefSeq" id="NP_001278553.1">
    <property type="nucleotide sequence ID" value="NM_001291624.1"/>
</dbReference>
<dbReference type="RefSeq" id="NP_001278554.1">
    <property type="nucleotide sequence ID" value="NM_001291625.1"/>
</dbReference>
<dbReference type="RefSeq" id="NP_061128.3">
    <property type="nucleotide sequence ID" value="NM_018658.4"/>
</dbReference>
<dbReference type="RefSeq" id="NP_733937.3">
    <property type="nucleotide sequence ID" value="NM_170741.4"/>
</dbReference>
<dbReference type="RefSeq" id="NP_733938.3">
    <property type="nucleotide sequence ID" value="NM_170742.3"/>
</dbReference>
<dbReference type="RefSeq" id="XP_011523083.1">
    <property type="nucleotide sequence ID" value="XM_011524781.3"/>
</dbReference>
<dbReference type="RefSeq" id="XP_016880102.1">
    <property type="nucleotide sequence ID" value="XM_017024613.1"/>
</dbReference>
<dbReference type="RefSeq" id="XP_054171995.1">
    <property type="nucleotide sequence ID" value="XM_054316020.1"/>
</dbReference>
<dbReference type="SMR" id="Q9NPI9"/>
<dbReference type="BioGRID" id="109975">
    <property type="interactions" value="1"/>
</dbReference>
<dbReference type="FunCoup" id="Q9NPI9">
    <property type="interactions" value="39"/>
</dbReference>
<dbReference type="IntAct" id="Q9NPI9">
    <property type="interactions" value="2"/>
</dbReference>
<dbReference type="MINT" id="Q9NPI9"/>
<dbReference type="STRING" id="9606.ENSP00000465295"/>
<dbReference type="TCDB" id="1.A.2.1.11">
    <property type="family name" value="the inward rectifier k(+) channel (irk-c) family"/>
</dbReference>
<dbReference type="PhosphoSitePlus" id="Q9NPI9"/>
<dbReference type="BioMuta" id="KCNJ16"/>
<dbReference type="DMDM" id="13878562"/>
<dbReference type="MassIVE" id="Q9NPI9"/>
<dbReference type="PaxDb" id="9606-ENSP00000465295"/>
<dbReference type="PeptideAtlas" id="Q9NPI9"/>
<dbReference type="Antibodypedia" id="31886">
    <property type="antibodies" value="169 antibodies from 29 providers"/>
</dbReference>
<dbReference type="DNASU" id="3773"/>
<dbReference type="Ensembl" id="ENST00000283936.5">
    <property type="protein sequence ID" value="ENSP00000283936.1"/>
    <property type="gene ID" value="ENSG00000153822.15"/>
</dbReference>
<dbReference type="Ensembl" id="ENST00000392670.5">
    <property type="protein sequence ID" value="ENSP00000376438.1"/>
    <property type="gene ID" value="ENSG00000153822.15"/>
</dbReference>
<dbReference type="Ensembl" id="ENST00000392671.6">
    <property type="protein sequence ID" value="ENSP00000376439.1"/>
    <property type="gene ID" value="ENSG00000153822.15"/>
</dbReference>
<dbReference type="Ensembl" id="ENST00000589377.1">
    <property type="protein sequence ID" value="ENSP00000465967.1"/>
    <property type="gene ID" value="ENSG00000153822.15"/>
</dbReference>
<dbReference type="Ensembl" id="ENST00000615244.4">
    <property type="protein sequence ID" value="ENSP00000479817.1"/>
    <property type="gene ID" value="ENSG00000153822.15"/>
</dbReference>
<dbReference type="GeneID" id="3773"/>
<dbReference type="KEGG" id="hsa:3773"/>
<dbReference type="MANE-Select" id="ENST00000392671.6">
    <property type="protein sequence ID" value="ENSP00000376439.1"/>
    <property type="RefSeq nucleotide sequence ID" value="NM_170741.4"/>
    <property type="RefSeq protein sequence ID" value="NP_733937.3"/>
</dbReference>
<dbReference type="UCSC" id="uc002jin.5">
    <property type="organism name" value="human"/>
</dbReference>
<dbReference type="AGR" id="HGNC:6262"/>
<dbReference type="CTD" id="3773"/>
<dbReference type="DisGeNET" id="3773"/>
<dbReference type="GeneCards" id="KCNJ16"/>
<dbReference type="HGNC" id="HGNC:6262">
    <property type="gene designation" value="KCNJ16"/>
</dbReference>
<dbReference type="HPA" id="ENSG00000153822">
    <property type="expression patterns" value="Group enriched (kidney, parathyroid gland, thyroid gland)"/>
</dbReference>
<dbReference type="MalaCards" id="KCNJ16"/>
<dbReference type="MIM" id="605722">
    <property type="type" value="gene"/>
</dbReference>
<dbReference type="MIM" id="619406">
    <property type="type" value="phenotype"/>
</dbReference>
<dbReference type="neXtProt" id="NX_Q9NPI9"/>
<dbReference type="OpenTargets" id="ENSG00000153822"/>
<dbReference type="PharmGKB" id="PA30047"/>
<dbReference type="VEuPathDB" id="HostDB:ENSG00000153822"/>
<dbReference type="eggNOG" id="KOG3827">
    <property type="taxonomic scope" value="Eukaryota"/>
</dbReference>
<dbReference type="GeneTree" id="ENSGT01030000234586"/>
<dbReference type="HOGENOM" id="CLU_022738_3_2_1"/>
<dbReference type="InParanoid" id="Q9NPI9"/>
<dbReference type="OMA" id="CVFEVRS"/>
<dbReference type="OrthoDB" id="273257at2759"/>
<dbReference type="PAN-GO" id="Q9NPI9">
    <property type="GO annotations" value="4 GO annotations based on evolutionary models"/>
</dbReference>
<dbReference type="PhylomeDB" id="Q9NPI9"/>
<dbReference type="TreeFam" id="TF313676"/>
<dbReference type="PathwayCommons" id="Q9NPI9"/>
<dbReference type="Reactome" id="R-HSA-1296041">
    <property type="pathway name" value="Activation of G protein gated Potassium channels"/>
</dbReference>
<dbReference type="Reactome" id="R-HSA-1296067">
    <property type="pathway name" value="Potassium transport channels"/>
</dbReference>
<dbReference type="Reactome" id="R-HSA-997272">
    <property type="pathway name" value="Inhibition of voltage gated Ca2+ channels via Gbeta/gamma subunits"/>
</dbReference>
<dbReference type="SignaLink" id="Q9NPI9"/>
<dbReference type="SIGNOR" id="Q9NPI9"/>
<dbReference type="BioGRID-ORCS" id="3773">
    <property type="hits" value="15 hits in 1142 CRISPR screens"/>
</dbReference>
<dbReference type="GeneWiki" id="KCNJ16"/>
<dbReference type="GenomeRNAi" id="3773"/>
<dbReference type="Pharos" id="Q9NPI9">
    <property type="development level" value="Tbio"/>
</dbReference>
<dbReference type="PRO" id="PR:Q9NPI9"/>
<dbReference type="Proteomes" id="UP000005640">
    <property type="component" value="Chromosome 17"/>
</dbReference>
<dbReference type="RNAct" id="Q9NPI9">
    <property type="molecule type" value="protein"/>
</dbReference>
<dbReference type="Bgee" id="ENSG00000153822">
    <property type="expression patterns" value="Expressed in renal medulla and 149 other cell types or tissues"/>
</dbReference>
<dbReference type="ExpressionAtlas" id="Q9NPI9">
    <property type="expression patterns" value="baseline and differential"/>
</dbReference>
<dbReference type="GO" id="GO:0016323">
    <property type="term" value="C:basolateral plasma membrane"/>
    <property type="evidence" value="ECO:0000314"/>
    <property type="project" value="MGI"/>
</dbReference>
<dbReference type="GO" id="GO:0005886">
    <property type="term" value="C:plasma membrane"/>
    <property type="evidence" value="ECO:0000318"/>
    <property type="project" value="GO_Central"/>
</dbReference>
<dbReference type="GO" id="GO:0008076">
    <property type="term" value="C:voltage-gated potassium channel complex"/>
    <property type="evidence" value="ECO:0000303"/>
    <property type="project" value="UniProtKB"/>
</dbReference>
<dbReference type="GO" id="GO:0005242">
    <property type="term" value="F:inward rectifier potassium channel activity"/>
    <property type="evidence" value="ECO:0000316"/>
    <property type="project" value="MGI"/>
</dbReference>
<dbReference type="GO" id="GO:1990573">
    <property type="term" value="P:potassium ion import across plasma membrane"/>
    <property type="evidence" value="ECO:0000318"/>
    <property type="project" value="GO_Central"/>
</dbReference>
<dbReference type="GO" id="GO:0071805">
    <property type="term" value="P:potassium ion transmembrane transport"/>
    <property type="evidence" value="ECO:0000316"/>
    <property type="project" value="MGI"/>
</dbReference>
<dbReference type="GO" id="GO:0006813">
    <property type="term" value="P:potassium ion transport"/>
    <property type="evidence" value="ECO:0000303"/>
    <property type="project" value="UniProtKB"/>
</dbReference>
<dbReference type="GO" id="GO:0034765">
    <property type="term" value="P:regulation of monoatomic ion transmembrane transport"/>
    <property type="evidence" value="ECO:0000318"/>
    <property type="project" value="GO_Central"/>
</dbReference>
<dbReference type="FunFam" id="1.10.287.70:FF:000063">
    <property type="entry name" value="ATP-sensitive inward rectifier potassium channel 14"/>
    <property type="match status" value="1"/>
</dbReference>
<dbReference type="FunFam" id="2.60.40.1400:FF:000003">
    <property type="entry name" value="Potassium voltage-gated channel subfamily J member 16"/>
    <property type="match status" value="1"/>
</dbReference>
<dbReference type="Gene3D" id="1.10.287.70">
    <property type="match status" value="1"/>
</dbReference>
<dbReference type="Gene3D" id="2.60.40.1400">
    <property type="entry name" value="G protein-activated inward rectifier potassium channel 1"/>
    <property type="match status" value="1"/>
</dbReference>
<dbReference type="InterPro" id="IPR014756">
    <property type="entry name" value="Ig_E-set"/>
</dbReference>
<dbReference type="InterPro" id="IPR041647">
    <property type="entry name" value="IRK_C"/>
</dbReference>
<dbReference type="InterPro" id="IPR016449">
    <property type="entry name" value="K_chnl_inward-rec_Kir"/>
</dbReference>
<dbReference type="InterPro" id="IPR008061">
    <property type="entry name" value="K_chnl_inward-rec_Kir5"/>
</dbReference>
<dbReference type="InterPro" id="IPR013518">
    <property type="entry name" value="K_chnl_inward-rec_Kir_cyto"/>
</dbReference>
<dbReference type="InterPro" id="IPR040445">
    <property type="entry name" value="Kir_TM"/>
</dbReference>
<dbReference type="PANTHER" id="PTHR11767">
    <property type="entry name" value="INWARD RECTIFIER POTASSIUM CHANNEL"/>
    <property type="match status" value="1"/>
</dbReference>
<dbReference type="PANTHER" id="PTHR11767:SF24">
    <property type="entry name" value="INWARD RECTIFIER POTASSIUM CHANNEL 16"/>
    <property type="match status" value="1"/>
</dbReference>
<dbReference type="Pfam" id="PF01007">
    <property type="entry name" value="IRK"/>
    <property type="match status" value="1"/>
</dbReference>
<dbReference type="Pfam" id="PF17655">
    <property type="entry name" value="IRK_C"/>
    <property type="match status" value="1"/>
</dbReference>
<dbReference type="PIRSF" id="PIRSF005465">
    <property type="entry name" value="GIRK_kir"/>
    <property type="match status" value="1"/>
</dbReference>
<dbReference type="PRINTS" id="PR01678">
    <property type="entry name" value="KIR5CHANNEL"/>
</dbReference>
<dbReference type="PRINTS" id="PR01320">
    <property type="entry name" value="KIRCHANNEL"/>
</dbReference>
<dbReference type="SUPFAM" id="SSF81296">
    <property type="entry name" value="E set domains"/>
    <property type="match status" value="1"/>
</dbReference>
<dbReference type="SUPFAM" id="SSF81324">
    <property type="entry name" value="Voltage-gated potassium channels"/>
    <property type="match status" value="1"/>
</dbReference>
<proteinExistence type="evidence at protein level"/>
<sequence>MSYYGSSYHIINADAKYPGYPPEHIIAEKRRARRRLLHKDGSCNVYFKHIFGEWGSYVVDIFTTLVDTKWRHMFVIFSLSYILSWLIFGSVFWLIAFHHGDLLNDPDITPCVDNVHSFTGAFLFSLETQTTIGYGYRCVTEECSVAVLMVILQSILSCIINTFIIGAALAKMATARKRAQTIRFSYFALIGMRDGKLCLMWRIGDFRPNHVVEGTVRAQLLRYTEDSEGRMTMAFKDLKLVNDQIILVTPVTIVHEIDHESPLYALDRKAVAKDNFEILVTFIYTGDSTGTSHQSRSSYVPREILWGHRFNDVLEVKRKYYKVNCLQFEGSVEVYAPFCSAKQLDWKDQQLHIEKAPPVRESCTSDTKARRRSFSAVAIVSSCENPEETTTSATHEYRETPYQKALLTLNRISVESQM</sequence>
<evidence type="ECO:0000250" key="1"/>
<evidence type="ECO:0000250" key="2">
    <source>
        <dbReference type="UniProtKB" id="F1NHE9"/>
    </source>
</evidence>
<evidence type="ECO:0000250" key="3">
    <source>
        <dbReference type="UniProtKB" id="P52191"/>
    </source>
</evidence>
<evidence type="ECO:0000250" key="4">
    <source>
        <dbReference type="UniProtKB" id="Q9Z307"/>
    </source>
</evidence>
<evidence type="ECO:0000269" key="5">
    <source>
    </source>
</evidence>
<evidence type="ECO:0000269" key="6">
    <source>
    </source>
</evidence>
<evidence type="ECO:0000269" key="7">
    <source>
    </source>
</evidence>
<evidence type="ECO:0000269" key="8">
    <source>
    </source>
</evidence>
<evidence type="ECO:0000305" key="9"/>
<evidence type="ECO:0000305" key="10">
    <source>
    </source>
</evidence>
<evidence type="ECO:0000305" key="11">
    <source>
    </source>
</evidence>
<organism>
    <name type="scientific">Homo sapiens</name>
    <name type="common">Human</name>
    <dbReference type="NCBI Taxonomy" id="9606"/>
    <lineage>
        <taxon>Eukaryota</taxon>
        <taxon>Metazoa</taxon>
        <taxon>Chordata</taxon>
        <taxon>Craniata</taxon>
        <taxon>Vertebrata</taxon>
        <taxon>Euteleostomi</taxon>
        <taxon>Mammalia</taxon>
        <taxon>Eutheria</taxon>
        <taxon>Euarchontoglires</taxon>
        <taxon>Primates</taxon>
        <taxon>Haplorrhini</taxon>
        <taxon>Catarrhini</taxon>
        <taxon>Hominidae</taxon>
        <taxon>Homo</taxon>
    </lineage>
</organism>
<reference key="1">
    <citation type="journal article" date="2000" name="Cytogenet. Cell Genet.">
        <title>The human inward rectifier K(+) channel subunit kir5.1 (KCNJ16) maps to chromosome 17q25 and is expressed in kidney and pancreas.</title>
        <authorList>
            <person name="Liu Y."/>
            <person name="McKenna E."/>
            <person name="Figueroa D.J."/>
            <person name="Blevins R."/>
            <person name="Austin C.P."/>
            <person name="Bennett P.B."/>
            <person name="Swanson R."/>
        </authorList>
    </citation>
    <scope>NUCLEOTIDE SEQUENCE [MRNA]</scope>
    <scope>TISSUE SPECIFICITY</scope>
</reference>
<reference key="2">
    <citation type="journal article" date="2001" name="FEBS Lett.">
        <title>Genetic and functional linkage of Kir5.1 and Kir2.1 channel subunits.</title>
        <authorList>
            <person name="Derst C."/>
            <person name="Karschin C."/>
            <person name="Wischmeyer E."/>
            <person name="Hirsch J.R."/>
            <person name="Preisig-Muller R."/>
            <person name="Rajan S."/>
            <person name="Engel H."/>
            <person name="Grzeschik K."/>
            <person name="Daut J."/>
            <person name="Karschin A."/>
        </authorList>
    </citation>
    <scope>NUCLEOTIDE SEQUENCE [GENOMIC DNA / MRNA]</scope>
    <scope>TISSUE SPECIFICITY</scope>
    <scope>SUBCELLULAR LOCATION</scope>
    <scope>INTERACTION WITH KCNJ2</scope>
    <source>
        <tissue>Kidney</tissue>
        <tissue>Parathyroid</tissue>
    </source>
</reference>
<reference key="3">
    <citation type="journal article" date="2014" name="FEBS Lett.">
        <title>Mislocalization of K+ channels causes the renal salt wasting in EAST/SeSAME syndrome.</title>
        <authorList>
            <person name="Tanemoto M."/>
            <person name="Abe T."/>
            <person name="Uchida S."/>
            <person name="Kawahara K."/>
        </authorList>
    </citation>
    <scope>SUBCELLULAR LOCATION</scope>
    <scope>TISSUE SPECIFICITY</scope>
    <scope>INTERACTION WITH KCNJ10 AND MAGI1</scope>
</reference>
<reference key="4">
    <citation type="journal article" date="2021" name="J. Am. Soc. Nephrol.">
        <title>Defects in KCNJ16 cause a novel tubulopathy with hypokalemia, salt wasting, disturbed acid-base homeostasis, and sensorineural deafness.</title>
        <authorList>
            <person name="Schlingmann K.P."/>
            <person name="Renigunta A."/>
            <person name="Hoorn E.J."/>
            <person name="Forst A.L."/>
            <person name="Renigunta V."/>
            <person name="Atanasov V."/>
            <person name="Mahendran S."/>
            <person name="Barakat T.S."/>
            <person name="Gillion V."/>
            <person name="Godefroid N."/>
            <person name="Brooks A.S."/>
            <person name="Lugtenberg D."/>
            <person name="Lake J."/>
            <person name="Debaix H."/>
            <person name="Rudin C."/>
            <person name="Knebelmann B."/>
            <person name="Tellier S."/>
            <person name="Rousset-Rouviere C."/>
            <person name="Viering D."/>
            <person name="de Baaij J.H.F."/>
            <person name="Weber S."/>
            <person name="Palygin O."/>
            <person name="Staruschenko A."/>
            <person name="Kleta R."/>
            <person name="Houillier P."/>
            <person name="Bockenhauer D."/>
            <person name="Devuyst O."/>
            <person name="Vargas-Poussou R."/>
            <person name="Warth R."/>
            <person name="Zdebik A.A."/>
            <person name="Konrad M."/>
        </authorList>
    </citation>
    <scope>VARIANTS HKTD ILE-64; ARG-132; ALA-135; CYS-137; 176-ARG--MET-418 DEL AND LEU-250</scope>
    <scope>INVOLVEMENT IN HKTD</scope>
    <scope>CHARACTERIZATION OF VARIANTS HKTD ILE-64; ARG-132; CYS-137; 176-ARG--MET-418 DEL AND LEU-250</scope>
</reference>
<keyword id="KW-1003">Cell membrane</keyword>
<keyword id="KW-0209">Deafness</keyword>
<keyword id="KW-0225">Disease variant</keyword>
<keyword id="KW-0407">Ion channel</keyword>
<keyword id="KW-0406">Ion transport</keyword>
<keyword id="KW-0472">Membrane</keyword>
<keyword id="KW-0597">Phosphoprotein</keyword>
<keyword id="KW-0630">Potassium</keyword>
<keyword id="KW-0633">Potassium transport</keyword>
<keyword id="KW-1267">Proteomics identification</keyword>
<keyword id="KW-1185">Reference proteome</keyword>
<keyword id="KW-0812">Transmembrane</keyword>
<keyword id="KW-1133">Transmembrane helix</keyword>
<keyword id="KW-0813">Transport</keyword>
<keyword id="KW-0851">Voltage-gated channel</keyword>
<name>KCJ16_HUMAN</name>
<feature type="chain" id="PRO_0000154975" description="Inward rectifier potassium channel 16">
    <location>
        <begin position="1"/>
        <end position="418"/>
    </location>
</feature>
<feature type="topological domain" description="Cytoplasmic" evidence="2">
    <location>
        <begin position="1"/>
        <end position="67"/>
    </location>
</feature>
<feature type="transmembrane region" description="Helical; Name=M1" evidence="2">
    <location>
        <begin position="68"/>
        <end position="94"/>
    </location>
</feature>
<feature type="topological domain" description="Extracellular" evidence="2">
    <location>
        <begin position="95"/>
        <end position="117"/>
    </location>
</feature>
<feature type="intramembrane region" description="Helical; Pore-forming; Name=H5" evidence="2">
    <location>
        <begin position="118"/>
        <end position="134"/>
    </location>
</feature>
<feature type="topological domain" description="Extracellular" evidence="2">
    <location>
        <begin position="135"/>
        <end position="143"/>
    </location>
</feature>
<feature type="transmembrane region" description="Helical; Name=M2" evidence="2">
    <location>
        <begin position="144"/>
        <end position="171"/>
    </location>
</feature>
<feature type="topological domain" description="Cytoplasmic" evidence="2">
    <location>
        <begin position="172"/>
        <end position="418"/>
    </location>
</feature>
<feature type="short sequence motif" description="Selectivity filter" evidence="2">
    <location>
        <begin position="131"/>
        <end position="136"/>
    </location>
</feature>
<feature type="site" description="Role in the control of polyamine-mediated channel gating and in the blocking by intracellular magnesium" evidence="1">
    <location>
        <position position="161"/>
    </location>
</feature>
<feature type="modified residue" description="Phosphoserine" evidence="4">
    <location>
        <position position="373"/>
    </location>
</feature>
<feature type="modified residue" description="Phosphoserine" evidence="4">
    <location>
        <position position="375"/>
    </location>
</feature>
<feature type="sequence variant" id="VAR_024510" description="In dbSNP:rs9302912.">
    <original>I</original>
    <variation>V</variation>
    <location>
        <position position="11"/>
    </location>
</feature>
<feature type="sequence variant" id="VAR_085941" description="In HKTD; when coexpressed with KCNJ10 or KCNJ15 in Xenopus oocytes, it results in decreased channel expression at the surface and reduced potassium current amplitude compared to the wild-type." evidence="8">
    <original>T</original>
    <variation>I</variation>
    <location>
        <position position="64"/>
    </location>
</feature>
<feature type="sequence variant" id="VAR_085942" description="In HKTD; when coexpressed with KCNJ10 in Xenopus oocytes, it results in decreased channel expression at the surface and reduced potassium current amplitude compared to the wild-type." evidence="8">
    <original>I</original>
    <variation>R</variation>
    <location>
        <position position="132"/>
    </location>
</feature>
<feature type="sequence variant" id="VAR_085943" description="In HKTD." evidence="8">
    <original>G</original>
    <variation>A</variation>
    <location>
        <position position="135"/>
    </location>
</feature>
<feature type="sequence variant" id="VAR_085944" description="In HKTD; when coexpressed with KCNJ10 or KCNJ15 in Xenopus oocytes, it results in decreased channel expression at the surface and reduced potassium current amplitude compared to the wild-type." evidence="8">
    <original>R</original>
    <variation>C</variation>
    <location>
        <position position="137"/>
    </location>
</feature>
<feature type="sequence variant" id="VAR_085945" description="In HKTD; when coexpressed with KCNJ10 or KCNJ15 in Xenopus oocytes, it results in decreased channel expression at the surface and reduced potassium current amplitude compared to the wild-type." evidence="8">
    <location>
        <begin position="176"/>
        <end position="418"/>
    </location>
</feature>
<feature type="sequence variant" id="VAR_085946" description="In HKTD; when coexpressed with KCNJ10 in Xenopus oocytes, it results in decreased channel expression at the surface and reduced potassium current amplitude compared to the wild-type." evidence="8">
    <original>P</original>
    <variation>L</variation>
    <location>
        <position position="250"/>
    </location>
</feature>